<proteinExistence type="evidence at protein level"/>
<accession>A2CIR7</accession>
<accession>Q0JG18</accession>
<accession>Q5JMU1</accession>
<name>NPR5_ORYSJ</name>
<organism>
    <name type="scientific">Oryza sativa subsp. japonica</name>
    <name type="common">Rice</name>
    <dbReference type="NCBI Taxonomy" id="39947"/>
    <lineage>
        <taxon>Eukaryota</taxon>
        <taxon>Viridiplantae</taxon>
        <taxon>Streptophyta</taxon>
        <taxon>Embryophyta</taxon>
        <taxon>Tracheophyta</taxon>
        <taxon>Spermatophyta</taxon>
        <taxon>Magnoliopsida</taxon>
        <taxon>Liliopsida</taxon>
        <taxon>Poales</taxon>
        <taxon>Poaceae</taxon>
        <taxon>BOP clade</taxon>
        <taxon>Oryzoideae</taxon>
        <taxon>Oryzeae</taxon>
        <taxon>Oryzinae</taxon>
        <taxon>Oryza</taxon>
        <taxon>Oryza sativa</taxon>
    </lineage>
</organism>
<comment type="function">
    <text evidence="1 2 3">May act as a substrate-specific adapter of an E3 ubiquitin-protein ligase complex (CUL3-RBX1-BTB) which mediates the ubiquitination and subsequent proteasomal degradation of target proteins (By similarity). Transcriptional co-regulator involved in the promotion of leaf and floral meristem fate and determinacy (By similarity). Required for the abscission of senescent organs, probably by regulating the cell wall disorganization in abscission zones (AZs, e.g. pulvini at the base of leaves) (By similarity). Maybe involved in defense response against pathogens (By similarity).</text>
</comment>
<comment type="pathway">
    <text evidence="1">Protein modification; protein ubiquitination.</text>
</comment>
<comment type="subunit">
    <text evidence="4 10">Homodimer (By similarity). Interacts with TGAL5, TGAL7, TGAL8 and TGAL11 (PubMed:24919709).</text>
</comment>
<comment type="subcellular location">
    <subcellularLocation>
        <location evidence="5">Nucleus</location>
    </subcellularLocation>
    <subcellularLocation>
        <location evidence="5">Cytoplasm</location>
    </subcellularLocation>
</comment>
<comment type="domain">
    <text evidence="1">The BTB/POZ domain mediates the interaction with some component of ubiquitin ligase complexes.</text>
</comment>
<comment type="similarity">
    <text evidence="13">Belongs to the plant 'ANKYRIN-BTB/POZ' family. 'NOOT-BOP-COCH-like' (NBCL) subfamily.</text>
</comment>
<comment type="sequence caution" evidence="13">
    <conflict type="erroneous gene model prediction">
        <sequence resource="EMBL-CDS" id="BAD87216"/>
    </conflict>
</comment>
<comment type="sequence caution" evidence="13">
    <conflict type="erroneous gene model prediction">
        <sequence resource="EMBL-CDS" id="BAF07310"/>
    </conflict>
</comment>
<comment type="sequence caution" evidence="13">
    <conflict type="erroneous gene model prediction">
        <sequence resource="EMBL-CDS" id="BAS76219"/>
    </conflict>
</comment>
<gene>
    <name evidence="11" type="primary">NPR5</name>
    <name evidence="12" type="synonym">NH4</name>
    <name evidence="15" type="ordered locus">Os01g0948900</name>
    <name evidence="13" type="ordered locus">LOC_Os01g72020</name>
    <name evidence="14" type="ORF">P0466H10.44-1</name>
</gene>
<feature type="chain" id="PRO_0000437003" description="BTB/POZ domain and ankyrin repeat-containing protein NPR5">
    <location>
        <begin position="1"/>
        <end position="506"/>
    </location>
</feature>
<feature type="domain" description="BTB" evidence="7">
    <location>
        <begin position="23"/>
        <end position="131"/>
    </location>
</feature>
<feature type="repeat" description="ANK 1" evidence="6">
    <location>
        <begin position="278"/>
        <end position="306"/>
    </location>
</feature>
<feature type="repeat" description="ANK 2" evidence="6">
    <location>
        <begin position="307"/>
        <end position="337"/>
    </location>
</feature>
<feature type="repeat" description="ANK 3" evidence="6">
    <location>
        <begin position="342"/>
        <end position="371"/>
    </location>
</feature>
<feature type="repeat" description="ANK 4" evidence="13">
    <location>
        <begin position="375"/>
        <end position="409"/>
    </location>
</feature>
<feature type="zinc finger region" description="C2HC NPR-type" evidence="8">
    <location>
        <begin position="137"/>
        <end position="151"/>
    </location>
</feature>
<feature type="region of interest" description="Disordered" evidence="9">
    <location>
        <begin position="481"/>
        <end position="506"/>
    </location>
</feature>
<feature type="binding site" evidence="8">
    <location>
        <position position="140"/>
    </location>
    <ligand>
        <name>Zn(2+)</name>
        <dbReference type="ChEBI" id="CHEBI:29105"/>
    </ligand>
</feature>
<feature type="binding site" evidence="8">
    <location>
        <position position="145"/>
    </location>
    <ligand>
        <name>Zn(2+)</name>
        <dbReference type="ChEBI" id="CHEBI:29105"/>
    </ligand>
</feature>
<feature type="binding site" evidence="8">
    <location>
        <position position="147"/>
    </location>
    <ligand>
        <name>Zn(2+)</name>
        <dbReference type="ChEBI" id="CHEBI:29105"/>
    </ligand>
</feature>
<feature type="binding site" evidence="8">
    <location>
        <position position="150"/>
    </location>
    <ligand>
        <name>Zn(2+)</name>
        <dbReference type="ChEBI" id="CHEBI:29105"/>
    </ligand>
</feature>
<reference key="1">
    <citation type="journal article" date="2007" name="Plant Biotechnol. J.">
        <title>Functional analysis of rice NPR1-like genes reveals that OsNPR1/NH1 is the rice orthologue conferring disease resistance with enhanced herbivore susceptibility.</title>
        <authorList>
            <person name="Yuan Y."/>
            <person name="Zhong S."/>
            <person name="Li Q."/>
            <person name="Zhu Z."/>
            <person name="Lou Y."/>
            <person name="Wang L."/>
            <person name="Wang J."/>
            <person name="Wang M."/>
            <person name="Li Q."/>
            <person name="Yang D."/>
            <person name="He Z."/>
        </authorList>
    </citation>
    <scope>NUCLEOTIDE SEQUENCE [GENOMIC DNA / MRNA]</scope>
</reference>
<reference key="2">
    <citation type="submission" date="2010-07" db="EMBL/GenBank/DDBJ databases">
        <title>Oryza sativa japonica group cultivar Dongjin putative NPR1-like protein 4 (NPR4) mRNA.</title>
        <authorList>
            <person name="Moon S.-J."/>
            <person name="Shin D."/>
            <person name="Kim B.-G."/>
            <person name="Park S.R."/>
            <person name="Byun M.-O."/>
        </authorList>
    </citation>
    <scope>NUCLEOTIDE SEQUENCE [MRNA]</scope>
    <source>
        <strain>cv. Dongjin</strain>
    </source>
</reference>
<reference key="3">
    <citation type="journal article" date="2002" name="Nature">
        <title>The genome sequence and structure of rice chromosome 1.</title>
        <authorList>
            <person name="Sasaki T."/>
            <person name="Matsumoto T."/>
            <person name="Yamamoto K."/>
            <person name="Sakata K."/>
            <person name="Baba T."/>
            <person name="Katayose Y."/>
            <person name="Wu J."/>
            <person name="Niimura Y."/>
            <person name="Cheng Z."/>
            <person name="Nagamura Y."/>
            <person name="Antonio B.A."/>
            <person name="Kanamori H."/>
            <person name="Hosokawa S."/>
            <person name="Masukawa M."/>
            <person name="Arikawa K."/>
            <person name="Chiden Y."/>
            <person name="Hayashi M."/>
            <person name="Okamoto M."/>
            <person name="Ando T."/>
            <person name="Aoki H."/>
            <person name="Arita K."/>
            <person name="Hamada M."/>
            <person name="Harada C."/>
            <person name="Hijishita S."/>
            <person name="Honda M."/>
            <person name="Ichikawa Y."/>
            <person name="Idonuma A."/>
            <person name="Iijima M."/>
            <person name="Ikeda M."/>
            <person name="Ikeno M."/>
            <person name="Ito S."/>
            <person name="Ito T."/>
            <person name="Ito Y."/>
            <person name="Ito Y."/>
            <person name="Iwabuchi A."/>
            <person name="Kamiya K."/>
            <person name="Karasawa W."/>
            <person name="Katagiri S."/>
            <person name="Kikuta A."/>
            <person name="Kobayashi N."/>
            <person name="Kono I."/>
            <person name="Machita K."/>
            <person name="Maehara T."/>
            <person name="Mizuno H."/>
            <person name="Mizubayashi T."/>
            <person name="Mukai Y."/>
            <person name="Nagasaki H."/>
            <person name="Nakashima M."/>
            <person name="Nakama Y."/>
            <person name="Nakamichi Y."/>
            <person name="Nakamura M."/>
            <person name="Namiki N."/>
            <person name="Negishi M."/>
            <person name="Ohta I."/>
            <person name="Ono N."/>
            <person name="Saji S."/>
            <person name="Sakai K."/>
            <person name="Shibata M."/>
            <person name="Shimokawa T."/>
            <person name="Shomura A."/>
            <person name="Song J."/>
            <person name="Takazaki Y."/>
            <person name="Terasawa K."/>
            <person name="Tsuji K."/>
            <person name="Waki K."/>
            <person name="Yamagata H."/>
            <person name="Yamane H."/>
            <person name="Yoshiki S."/>
            <person name="Yoshihara R."/>
            <person name="Yukawa K."/>
            <person name="Zhong H."/>
            <person name="Iwama H."/>
            <person name="Endo T."/>
            <person name="Ito H."/>
            <person name="Hahn J.H."/>
            <person name="Kim H.-I."/>
            <person name="Eun M.-Y."/>
            <person name="Yano M."/>
            <person name="Jiang J."/>
            <person name="Gojobori T."/>
        </authorList>
    </citation>
    <scope>NUCLEOTIDE SEQUENCE [LARGE SCALE GENOMIC DNA]</scope>
    <source>
        <strain>cv. Nipponbare</strain>
    </source>
</reference>
<reference key="4">
    <citation type="journal article" date="2005" name="Nature">
        <title>The map-based sequence of the rice genome.</title>
        <authorList>
            <consortium name="International rice genome sequencing project (IRGSP)"/>
        </authorList>
    </citation>
    <scope>NUCLEOTIDE SEQUENCE [LARGE SCALE GENOMIC DNA]</scope>
    <source>
        <strain>cv. Nipponbare</strain>
    </source>
</reference>
<reference key="5">
    <citation type="journal article" date="2008" name="Nucleic Acids Res.">
        <title>The rice annotation project database (RAP-DB): 2008 update.</title>
        <authorList>
            <consortium name="The rice annotation project (RAP)"/>
        </authorList>
    </citation>
    <scope>GENOME REANNOTATION</scope>
    <source>
        <strain>cv. Nipponbare</strain>
    </source>
</reference>
<reference key="6">
    <citation type="journal article" date="2013" name="Rice">
        <title>Improvement of the Oryza sativa Nipponbare reference genome using next generation sequence and optical map data.</title>
        <authorList>
            <person name="Kawahara Y."/>
            <person name="de la Bastide M."/>
            <person name="Hamilton J.P."/>
            <person name="Kanamori H."/>
            <person name="McCombie W.R."/>
            <person name="Ouyang S."/>
            <person name="Schwartz D.C."/>
            <person name="Tanaka T."/>
            <person name="Wu J."/>
            <person name="Zhou S."/>
            <person name="Childs K.L."/>
            <person name="Davidson R.M."/>
            <person name="Lin H."/>
            <person name="Quesada-Ocampo L."/>
            <person name="Vaillancourt B."/>
            <person name="Sakai H."/>
            <person name="Lee S.S."/>
            <person name="Kim J."/>
            <person name="Numa H."/>
            <person name="Itoh T."/>
            <person name="Buell C.R."/>
            <person name="Matsumoto T."/>
        </authorList>
    </citation>
    <scope>GENOME REANNOTATION</scope>
    <source>
        <strain>cv. Nipponbare</strain>
    </source>
</reference>
<reference key="7">
    <citation type="journal article" date="2014" name="BMC Genomics">
        <title>Interaction specificity and coexpression of rice NPR1 homologs 1 and 3 (NH1 and NH3), TGA transcription factors and negative regulator of resistance (NRR) proteins.</title>
        <authorList>
            <person name="Chern M."/>
            <person name="Bai W."/>
            <person name="Ruan D."/>
            <person name="Oh T."/>
            <person name="Chen X."/>
            <person name="Ronald P.C."/>
        </authorList>
    </citation>
    <scope>INTERACTION WITH TGAL5; TGAL7; TGAL8 AND TGAL11</scope>
</reference>
<protein>
    <recommendedName>
        <fullName evidence="13">BTB/POZ domain and ankyrin repeat-containing protein NPR5</fullName>
        <shortName evidence="11">OsNPR5</shortName>
    </recommendedName>
</protein>
<keyword id="KW-0040">ANK repeat</keyword>
<keyword id="KW-0963">Cytoplasm</keyword>
<keyword id="KW-0479">Metal-binding</keyword>
<keyword id="KW-0539">Nucleus</keyword>
<keyword id="KW-0611">Plant defense</keyword>
<keyword id="KW-1185">Reference proteome</keyword>
<keyword id="KW-0677">Repeat</keyword>
<keyword id="KW-0833">Ubl conjugation pathway</keyword>
<keyword id="KW-0862">Zinc</keyword>
<keyword id="KW-0863">Zinc-finger</keyword>
<evidence type="ECO:0000250" key="1">
    <source>
        <dbReference type="UniProtKB" id="O22286"/>
    </source>
</evidence>
<evidence type="ECO:0000250" key="2">
    <source>
        <dbReference type="UniProtKB" id="Q2HW56"/>
    </source>
</evidence>
<evidence type="ECO:0000250" key="3">
    <source>
        <dbReference type="UniProtKB" id="Q9FDY4"/>
    </source>
</evidence>
<evidence type="ECO:0000250" key="4">
    <source>
        <dbReference type="UniProtKB" id="Q9ZVC2"/>
    </source>
</evidence>
<evidence type="ECO:0000250" key="5">
    <source>
        <dbReference type="UniProtKB" id="S4VGD0"/>
    </source>
</evidence>
<evidence type="ECO:0000255" key="6"/>
<evidence type="ECO:0000255" key="7">
    <source>
        <dbReference type="PROSITE-ProRule" id="PRU00037"/>
    </source>
</evidence>
<evidence type="ECO:0000255" key="8">
    <source>
        <dbReference type="PROSITE-ProRule" id="PRU01391"/>
    </source>
</evidence>
<evidence type="ECO:0000256" key="9">
    <source>
        <dbReference type="SAM" id="MobiDB-lite"/>
    </source>
</evidence>
<evidence type="ECO:0000269" key="10">
    <source>
    </source>
</evidence>
<evidence type="ECO:0000303" key="11">
    <source>
    </source>
</evidence>
<evidence type="ECO:0000303" key="12">
    <source>
    </source>
</evidence>
<evidence type="ECO:0000305" key="13"/>
<evidence type="ECO:0000312" key="14">
    <source>
        <dbReference type="EMBL" id="BAD87216.1"/>
    </source>
</evidence>
<evidence type="ECO:0000312" key="15">
    <source>
        <dbReference type="EMBL" id="BAF07310.1"/>
    </source>
</evidence>
<dbReference type="EMBL" id="DQ450955">
    <property type="protein sequence ID" value="ABE11621.1"/>
    <property type="molecule type" value="mRNA"/>
</dbReference>
<dbReference type="EMBL" id="DQ450956">
    <property type="protein sequence ID" value="ABE11622.1"/>
    <property type="molecule type" value="Genomic_DNA"/>
</dbReference>
<dbReference type="EMBL" id="HM991171">
    <property type="protein sequence ID" value="AEF30414.1"/>
    <property type="molecule type" value="mRNA"/>
</dbReference>
<dbReference type="EMBL" id="AP003259">
    <property type="protein sequence ID" value="BAD87216.1"/>
    <property type="status" value="ALT_SEQ"/>
    <property type="molecule type" value="Genomic_DNA"/>
</dbReference>
<dbReference type="EMBL" id="AP008207">
    <property type="protein sequence ID" value="BAF07310.1"/>
    <property type="status" value="ALT_SEQ"/>
    <property type="molecule type" value="Genomic_DNA"/>
</dbReference>
<dbReference type="EMBL" id="AP014957">
    <property type="protein sequence ID" value="BAS76219.1"/>
    <property type="status" value="ALT_SEQ"/>
    <property type="molecule type" value="Genomic_DNA"/>
</dbReference>
<dbReference type="RefSeq" id="XP_015627734.1">
    <property type="nucleotide sequence ID" value="XM_015772248.1"/>
</dbReference>
<dbReference type="SMR" id="A2CIR7"/>
<dbReference type="FunCoup" id="A2CIR7">
    <property type="interactions" value="551"/>
</dbReference>
<dbReference type="STRING" id="39947.A2CIR7"/>
<dbReference type="PaxDb" id="39947-A2CIR7"/>
<dbReference type="EnsemblPlants" id="Os01t0948900-03">
    <property type="protein sequence ID" value="Os01t0948900-03"/>
    <property type="gene ID" value="Os01g0948900"/>
</dbReference>
<dbReference type="Gramene" id="Os01t0948900-03">
    <property type="protein sequence ID" value="Os01t0948900-03"/>
    <property type="gene ID" value="Os01g0948900"/>
</dbReference>
<dbReference type="KEGG" id="dosa:Os01g0948900"/>
<dbReference type="eggNOG" id="KOG0504">
    <property type="taxonomic scope" value="Eukaryota"/>
</dbReference>
<dbReference type="InParanoid" id="A2CIR7"/>
<dbReference type="OrthoDB" id="45365at2759"/>
<dbReference type="UniPathway" id="UPA00143"/>
<dbReference type="Proteomes" id="UP000000763">
    <property type="component" value="Chromosome 1"/>
</dbReference>
<dbReference type="Proteomes" id="UP000059680">
    <property type="component" value="Chromosome 1"/>
</dbReference>
<dbReference type="GO" id="GO:0005737">
    <property type="term" value="C:cytoplasm"/>
    <property type="evidence" value="ECO:0007669"/>
    <property type="project" value="UniProtKB-SubCell"/>
</dbReference>
<dbReference type="GO" id="GO:0005634">
    <property type="term" value="C:nucleus"/>
    <property type="evidence" value="ECO:0000318"/>
    <property type="project" value="GO_Central"/>
</dbReference>
<dbReference type="GO" id="GO:0000976">
    <property type="term" value="F:transcription cis-regulatory region binding"/>
    <property type="evidence" value="ECO:0000318"/>
    <property type="project" value="GO_Central"/>
</dbReference>
<dbReference type="GO" id="GO:0008270">
    <property type="term" value="F:zinc ion binding"/>
    <property type="evidence" value="ECO:0007669"/>
    <property type="project" value="UniProtKB-KW"/>
</dbReference>
<dbReference type="GO" id="GO:0009864">
    <property type="term" value="P:induced systemic resistance, jasmonic acid mediated signaling pathway"/>
    <property type="evidence" value="ECO:0000318"/>
    <property type="project" value="GO_Central"/>
</dbReference>
<dbReference type="GO" id="GO:0099402">
    <property type="term" value="P:plant organ development"/>
    <property type="evidence" value="ECO:0007669"/>
    <property type="project" value="InterPro"/>
</dbReference>
<dbReference type="GO" id="GO:0006355">
    <property type="term" value="P:regulation of DNA-templated transcription"/>
    <property type="evidence" value="ECO:0000318"/>
    <property type="project" value="GO_Central"/>
</dbReference>
<dbReference type="CDD" id="cd18310">
    <property type="entry name" value="BTB_POZ_NPR_plant"/>
    <property type="match status" value="1"/>
</dbReference>
<dbReference type="FunFam" id="3.30.710.10:FF:000084">
    <property type="entry name" value="regulatory protein NPR5 isoform X1"/>
    <property type="match status" value="1"/>
</dbReference>
<dbReference type="FunFam" id="1.25.40.20:FF:000058">
    <property type="entry name" value="regulatory protein NPR5 isoform X2"/>
    <property type="match status" value="1"/>
</dbReference>
<dbReference type="Gene3D" id="1.25.40.20">
    <property type="entry name" value="Ankyrin repeat-containing domain"/>
    <property type="match status" value="1"/>
</dbReference>
<dbReference type="Gene3D" id="3.30.710.10">
    <property type="entry name" value="Potassium Channel Kv1.1, Chain A"/>
    <property type="match status" value="1"/>
</dbReference>
<dbReference type="InterPro" id="IPR002110">
    <property type="entry name" value="Ankyrin_rpt"/>
</dbReference>
<dbReference type="InterPro" id="IPR036770">
    <property type="entry name" value="Ankyrin_rpt-contain_sf"/>
</dbReference>
<dbReference type="InterPro" id="IPR000210">
    <property type="entry name" value="BTB/POZ_dom"/>
</dbReference>
<dbReference type="InterPro" id="IPR044284">
    <property type="entry name" value="NPR5/6"/>
</dbReference>
<dbReference type="InterPro" id="IPR024228">
    <property type="entry name" value="NPR_central_dom"/>
</dbReference>
<dbReference type="InterPro" id="IPR011333">
    <property type="entry name" value="SKP1/BTB/POZ_sf"/>
</dbReference>
<dbReference type="PANTHER" id="PTHR46668">
    <property type="entry name" value="BTB/POZ DOMAIN AND ANKYRIN REPEAT-CONTAINING PROTEIN NH5.2"/>
    <property type="match status" value="1"/>
</dbReference>
<dbReference type="PANTHER" id="PTHR46668:SF1">
    <property type="entry name" value="REGULATORY PROTEIN NPR5"/>
    <property type="match status" value="1"/>
</dbReference>
<dbReference type="Pfam" id="PF12796">
    <property type="entry name" value="Ank_2"/>
    <property type="match status" value="1"/>
</dbReference>
<dbReference type="Pfam" id="PF00651">
    <property type="entry name" value="BTB"/>
    <property type="match status" value="1"/>
</dbReference>
<dbReference type="Pfam" id="PF11900">
    <property type="entry name" value="DUF3420"/>
    <property type="match status" value="1"/>
</dbReference>
<dbReference type="SMART" id="SM00248">
    <property type="entry name" value="ANK"/>
    <property type="match status" value="2"/>
</dbReference>
<dbReference type="SMART" id="SM00225">
    <property type="entry name" value="BTB"/>
    <property type="match status" value="1"/>
</dbReference>
<dbReference type="SUPFAM" id="SSF48403">
    <property type="entry name" value="Ankyrin repeat"/>
    <property type="match status" value="1"/>
</dbReference>
<dbReference type="SUPFAM" id="SSF54695">
    <property type="entry name" value="POZ domain"/>
    <property type="match status" value="1"/>
</dbReference>
<dbReference type="PROSITE" id="PS50297">
    <property type="entry name" value="ANK_REP_REGION"/>
    <property type="match status" value="1"/>
</dbReference>
<dbReference type="PROSITE" id="PS50088">
    <property type="entry name" value="ANK_REPEAT"/>
    <property type="match status" value="1"/>
</dbReference>
<dbReference type="PROSITE" id="PS50097">
    <property type="entry name" value="BTB"/>
    <property type="match status" value="1"/>
</dbReference>
<dbReference type="PROSITE" id="PS52046">
    <property type="entry name" value="ZF_C2HC_NPR"/>
    <property type="match status" value="1"/>
</dbReference>
<sequence>MEETLKSLSMDYLNLLINGQAFSDVTFSVEGRLVHAHRCILAARSLFFRKFFCGAAADQAAAPPGALLLDHLSPRSPSGGASASSPRGAGGSAAAAAAATPGAVIPVSSVSYEVFLLLLQFLYSGQVSLVPQKGEPRPGCGERGCWHTHCAAAVDLALDTLAAARSFGVEELALLTQKQLAGMVEKASIEDVMKVLMASRKQDLHQLWTTCSHLVAKSGLPPEVLAKHLPIDVVAKIDELRLKSMSRRSPFLSHHHHHPHAAAAGIEASSAAELDDHHKIRRMRRALDSSDVELVKLMVMGEGLNLDDALALHYAVENCSREVVKALLELGAADVNHPAGPAGKTPLHVAAEMVCPDMVAVLLDHHADPNVRTVDGVTPLDILRTLTSDFLFKGAVPGLAHIEPNKLRLCLELVQSAAMVMSREDAQTAAVNAAPIYGESPGGGGGGGVYNASGTSSSMVNLSLDNRMVYLNLGMDAQFGKMNDGGDGDDGGSRGPSSLFSPHGFP</sequence>